<accession>Q5AFK3</accession>
<accession>A0A1D8PQM6</accession>
<accession>Q3MPS7</accession>
<gene>
    <name type="primary">PSF3</name>
    <name type="ordered locus">CAALFM_C700530CA</name>
    <name type="ORF">CaJ7.0068</name>
    <name type="ORF">CaO19.7065</name>
</gene>
<organism>
    <name type="scientific">Candida albicans (strain SC5314 / ATCC MYA-2876)</name>
    <name type="common">Yeast</name>
    <dbReference type="NCBI Taxonomy" id="237561"/>
    <lineage>
        <taxon>Eukaryota</taxon>
        <taxon>Fungi</taxon>
        <taxon>Dikarya</taxon>
        <taxon>Ascomycota</taxon>
        <taxon>Saccharomycotina</taxon>
        <taxon>Pichiomycetes</taxon>
        <taxon>Debaryomycetaceae</taxon>
        <taxon>Candida/Lodderomyces clade</taxon>
        <taxon>Candida</taxon>
    </lineage>
</organism>
<proteinExistence type="inferred from homology"/>
<feature type="chain" id="PRO_0000278416" description="DNA replication complex GINS protein PSF3">
    <location>
        <begin position="1"/>
        <end position="177"/>
    </location>
</feature>
<keyword id="KW-0235">DNA replication</keyword>
<keyword id="KW-0539">Nucleus</keyword>
<keyword id="KW-1185">Reference proteome</keyword>
<reference key="1">
    <citation type="journal article" date="2005" name="Genetics">
        <title>Sequence finishing and gene mapping for Candida albicans chromosome 7 and syntenic analysis against the Saccharomyces cerevisiae genome.</title>
        <authorList>
            <person name="Chibana H."/>
            <person name="Oka N."/>
            <person name="Nakayama H."/>
            <person name="Aoyama T."/>
            <person name="Magee B.B."/>
            <person name="Magee P.T."/>
            <person name="Mikami Y."/>
        </authorList>
    </citation>
    <scope>NUCLEOTIDE SEQUENCE [LARGE SCALE GENOMIC DNA]</scope>
    <source>
        <strain>SC5314 / ATCC MYA-2876</strain>
    </source>
</reference>
<reference key="2">
    <citation type="journal article" date="2004" name="Proc. Natl. Acad. Sci. U.S.A.">
        <title>The diploid genome sequence of Candida albicans.</title>
        <authorList>
            <person name="Jones T."/>
            <person name="Federspiel N.A."/>
            <person name="Chibana H."/>
            <person name="Dungan J."/>
            <person name="Kalman S."/>
            <person name="Magee B.B."/>
            <person name="Newport G."/>
            <person name="Thorstenson Y.R."/>
            <person name="Agabian N."/>
            <person name="Magee P.T."/>
            <person name="Davis R.W."/>
            <person name="Scherer S."/>
        </authorList>
    </citation>
    <scope>NUCLEOTIDE SEQUENCE [LARGE SCALE GENOMIC DNA]</scope>
    <source>
        <strain>SC5314 / ATCC MYA-2876</strain>
    </source>
</reference>
<reference key="3">
    <citation type="journal article" date="2007" name="Genome Biol.">
        <title>Assembly of the Candida albicans genome into sixteen supercontigs aligned on the eight chromosomes.</title>
        <authorList>
            <person name="van het Hoog M."/>
            <person name="Rast T.J."/>
            <person name="Martchenko M."/>
            <person name="Grindle S."/>
            <person name="Dignard D."/>
            <person name="Hogues H."/>
            <person name="Cuomo C."/>
            <person name="Berriman M."/>
            <person name="Scherer S."/>
            <person name="Magee B.B."/>
            <person name="Whiteway M."/>
            <person name="Chibana H."/>
            <person name="Nantel A."/>
            <person name="Magee P.T."/>
        </authorList>
    </citation>
    <scope>GENOME REANNOTATION</scope>
    <source>
        <strain>SC5314 / ATCC MYA-2876</strain>
    </source>
</reference>
<reference key="4">
    <citation type="journal article" date="2013" name="Genome Biol.">
        <title>Assembly of a phased diploid Candida albicans genome facilitates allele-specific measurements and provides a simple model for repeat and indel structure.</title>
        <authorList>
            <person name="Muzzey D."/>
            <person name="Schwartz K."/>
            <person name="Weissman J.S."/>
            <person name="Sherlock G."/>
        </authorList>
    </citation>
    <scope>NUCLEOTIDE SEQUENCE [LARGE SCALE GENOMIC DNA]</scope>
    <scope>GENOME REANNOTATION</scope>
    <source>
        <strain>SC5314 / ATCC MYA-2876</strain>
    </source>
</reference>
<protein>
    <recommendedName>
        <fullName>DNA replication complex GINS protein PSF3</fullName>
    </recommendedName>
</protein>
<comment type="function">
    <text evidence="1">The GINS complex plays an essential role in the initiation of DNA replication.</text>
</comment>
<comment type="subunit">
    <text evidence="1">Component of the GINS complex which is a heterotetramer of SLD5, PSF1, PSF2 and PSF3.</text>
</comment>
<comment type="subcellular location">
    <subcellularLocation>
        <location evidence="1">Nucleus</location>
    </subcellularLocation>
</comment>
<comment type="similarity">
    <text evidence="2">Belongs to the GINS3/PSF3 family.</text>
</comment>
<evidence type="ECO:0000250" key="1"/>
<evidence type="ECO:0000305" key="2"/>
<sequence>MTTDYYDLDDILADSEKLTCKFNITVPGLGYLEGNPGKPIHEDTKLELPHWLSGILATVAIDEDSNINFLDLADPDIIKEKVINAIKTDPLAVDLHKLTPYYYSLILKWGNLYTDKTLIANVMNCLKARSLEIYNFSNNANKTLNNEFLYTLDEFERALFKSTSDSNKSMRKWLKTK</sequence>
<dbReference type="EMBL" id="AP006852">
    <property type="protein sequence ID" value="BAE44583.1"/>
    <property type="molecule type" value="Genomic_DNA"/>
</dbReference>
<dbReference type="EMBL" id="CP017629">
    <property type="protein sequence ID" value="AOW30432.1"/>
    <property type="molecule type" value="Genomic_DNA"/>
</dbReference>
<dbReference type="RefSeq" id="XP_720357.1">
    <property type="nucleotide sequence ID" value="XM_715264.1"/>
</dbReference>
<dbReference type="SMR" id="Q5AFK3"/>
<dbReference type="FunCoup" id="Q5AFK3">
    <property type="interactions" value="442"/>
</dbReference>
<dbReference type="STRING" id="237561.Q5AFK3"/>
<dbReference type="EnsemblFungi" id="C7_00530C_A-T">
    <property type="protein sequence ID" value="C7_00530C_A-T-p1"/>
    <property type="gene ID" value="C7_00530C_A"/>
</dbReference>
<dbReference type="GeneID" id="3637999"/>
<dbReference type="KEGG" id="cal:CAALFM_C700530CA"/>
<dbReference type="CGD" id="CAL0000201451">
    <property type="gene designation" value="PSF3"/>
</dbReference>
<dbReference type="VEuPathDB" id="FungiDB:C7_00530C_A"/>
<dbReference type="HOGENOM" id="CLU_081646_0_1_1"/>
<dbReference type="InParanoid" id="Q5AFK3"/>
<dbReference type="OMA" id="AAYKEIY"/>
<dbReference type="OrthoDB" id="10251744at2759"/>
<dbReference type="Proteomes" id="UP000000559">
    <property type="component" value="Chromosome 7"/>
</dbReference>
<dbReference type="GO" id="GO:0000811">
    <property type="term" value="C:GINS complex"/>
    <property type="evidence" value="ECO:0000318"/>
    <property type="project" value="GO_Central"/>
</dbReference>
<dbReference type="GO" id="GO:1902975">
    <property type="term" value="P:mitotic DNA replication initiation"/>
    <property type="evidence" value="ECO:0000318"/>
    <property type="project" value="GO_Central"/>
</dbReference>
<dbReference type="CDD" id="cd11713">
    <property type="entry name" value="GINS_A_psf3"/>
    <property type="match status" value="1"/>
</dbReference>
<dbReference type="CDD" id="cd21693">
    <property type="entry name" value="GINS_B_Psf3"/>
    <property type="match status" value="1"/>
</dbReference>
<dbReference type="Gene3D" id="1.20.58.2050">
    <property type="match status" value="1"/>
</dbReference>
<dbReference type="InterPro" id="IPR021151">
    <property type="entry name" value="GINS_A"/>
</dbReference>
<dbReference type="InterPro" id="IPR036224">
    <property type="entry name" value="GINS_bundle-like_dom_sf"/>
</dbReference>
<dbReference type="InterPro" id="IPR010492">
    <property type="entry name" value="GINS_Psf3"/>
</dbReference>
<dbReference type="InterPro" id="IPR038437">
    <property type="entry name" value="GINS_Psf3_sf"/>
</dbReference>
<dbReference type="InterPro" id="IPR055221">
    <property type="entry name" value="PSF3_N"/>
</dbReference>
<dbReference type="PANTHER" id="PTHR22768">
    <property type="entry name" value="DNA REPLICATION COMPLEX GINS PROTEIN PSF3"/>
    <property type="match status" value="1"/>
</dbReference>
<dbReference type="PANTHER" id="PTHR22768:SF0">
    <property type="entry name" value="DNA REPLICATION COMPLEX GINS PROTEIN PSF3"/>
    <property type="match status" value="1"/>
</dbReference>
<dbReference type="Pfam" id="PF22466">
    <property type="entry name" value="PSF3_N"/>
    <property type="match status" value="1"/>
</dbReference>
<dbReference type="Pfam" id="PF05916">
    <property type="entry name" value="Sld5"/>
    <property type="match status" value="1"/>
</dbReference>
<dbReference type="SUPFAM" id="SSF158573">
    <property type="entry name" value="GINS helical bundle-like"/>
    <property type="match status" value="1"/>
</dbReference>
<dbReference type="SUPFAM" id="SSF160059">
    <property type="entry name" value="PriA/YqbF domain"/>
    <property type="match status" value="1"/>
</dbReference>
<name>PSF3_CANAL</name>